<feature type="chain" id="PRO_1000146651" description="Sulfite reductase [NADPH] hemoprotein beta-component 1">
    <location>
        <begin position="1"/>
        <end position="570"/>
    </location>
</feature>
<feature type="binding site" evidence="1">
    <location>
        <position position="434"/>
    </location>
    <ligand>
        <name>[4Fe-4S] cluster</name>
        <dbReference type="ChEBI" id="CHEBI:49883"/>
    </ligand>
</feature>
<feature type="binding site" evidence="1">
    <location>
        <position position="440"/>
    </location>
    <ligand>
        <name>[4Fe-4S] cluster</name>
        <dbReference type="ChEBI" id="CHEBI:49883"/>
    </ligand>
</feature>
<feature type="binding site" evidence="1">
    <location>
        <position position="479"/>
    </location>
    <ligand>
        <name>[4Fe-4S] cluster</name>
        <dbReference type="ChEBI" id="CHEBI:49883"/>
    </ligand>
</feature>
<feature type="binding site" evidence="1">
    <location>
        <position position="483"/>
    </location>
    <ligand>
        <name>[4Fe-4S] cluster</name>
        <dbReference type="ChEBI" id="CHEBI:49883"/>
    </ligand>
</feature>
<feature type="binding site" description="axial binding residue" evidence="1">
    <location>
        <position position="483"/>
    </location>
    <ligand>
        <name>siroheme</name>
        <dbReference type="ChEBI" id="CHEBI:60052"/>
    </ligand>
    <ligandPart>
        <name>Fe</name>
        <dbReference type="ChEBI" id="CHEBI:18248"/>
    </ligandPart>
</feature>
<dbReference type="EC" id="1.8.1.2" evidence="1"/>
<dbReference type="EMBL" id="CP000964">
    <property type="protein sequence ID" value="ACI07484.1"/>
    <property type="molecule type" value="Genomic_DNA"/>
</dbReference>
<dbReference type="SMR" id="B5XV25"/>
<dbReference type="KEGG" id="kpe:KPK_1005"/>
<dbReference type="HOGENOM" id="CLU_001975_3_2_6"/>
<dbReference type="UniPathway" id="UPA00140">
    <property type="reaction ID" value="UER00207"/>
</dbReference>
<dbReference type="Proteomes" id="UP000001734">
    <property type="component" value="Chromosome"/>
</dbReference>
<dbReference type="GO" id="GO:0009337">
    <property type="term" value="C:sulfite reductase complex (NADPH)"/>
    <property type="evidence" value="ECO:0007669"/>
    <property type="project" value="InterPro"/>
</dbReference>
<dbReference type="GO" id="GO:0051539">
    <property type="term" value="F:4 iron, 4 sulfur cluster binding"/>
    <property type="evidence" value="ECO:0007669"/>
    <property type="project" value="UniProtKB-KW"/>
</dbReference>
<dbReference type="GO" id="GO:0020037">
    <property type="term" value="F:heme binding"/>
    <property type="evidence" value="ECO:0007669"/>
    <property type="project" value="InterPro"/>
</dbReference>
<dbReference type="GO" id="GO:0046872">
    <property type="term" value="F:metal ion binding"/>
    <property type="evidence" value="ECO:0007669"/>
    <property type="project" value="UniProtKB-KW"/>
</dbReference>
<dbReference type="GO" id="GO:0050661">
    <property type="term" value="F:NADP binding"/>
    <property type="evidence" value="ECO:0007669"/>
    <property type="project" value="InterPro"/>
</dbReference>
<dbReference type="GO" id="GO:0050311">
    <property type="term" value="F:sulfite reductase (ferredoxin) activity"/>
    <property type="evidence" value="ECO:0007669"/>
    <property type="project" value="TreeGrafter"/>
</dbReference>
<dbReference type="GO" id="GO:0004783">
    <property type="term" value="F:sulfite reductase (NADPH) activity"/>
    <property type="evidence" value="ECO:0007669"/>
    <property type="project" value="UniProtKB-UniRule"/>
</dbReference>
<dbReference type="GO" id="GO:0019344">
    <property type="term" value="P:cysteine biosynthetic process"/>
    <property type="evidence" value="ECO:0007669"/>
    <property type="project" value="UniProtKB-KW"/>
</dbReference>
<dbReference type="GO" id="GO:0070814">
    <property type="term" value="P:hydrogen sulfide biosynthetic process"/>
    <property type="evidence" value="ECO:0007669"/>
    <property type="project" value="UniProtKB-UniRule"/>
</dbReference>
<dbReference type="GO" id="GO:0000103">
    <property type="term" value="P:sulfate assimilation"/>
    <property type="evidence" value="ECO:0007669"/>
    <property type="project" value="UniProtKB-UniRule"/>
</dbReference>
<dbReference type="FunFam" id="3.30.413.10:FF:000003">
    <property type="entry name" value="Sulfite reductase [NADPH] hemoprotein beta-component"/>
    <property type="match status" value="1"/>
</dbReference>
<dbReference type="FunFam" id="3.30.413.10:FF:000004">
    <property type="entry name" value="Sulfite reductase [NADPH] hemoprotein beta-component"/>
    <property type="match status" value="1"/>
</dbReference>
<dbReference type="Gene3D" id="3.30.413.10">
    <property type="entry name" value="Sulfite Reductase Hemoprotein, domain 1"/>
    <property type="match status" value="2"/>
</dbReference>
<dbReference type="HAMAP" id="MF_01540">
    <property type="entry name" value="CysI"/>
    <property type="match status" value="1"/>
</dbReference>
<dbReference type="InterPro" id="IPR011786">
    <property type="entry name" value="CysI"/>
</dbReference>
<dbReference type="InterPro" id="IPR005117">
    <property type="entry name" value="NiRdtase/SiRdtase_haem-b_fer"/>
</dbReference>
<dbReference type="InterPro" id="IPR036136">
    <property type="entry name" value="Nit/Sulf_reduc_fer-like_dom_sf"/>
</dbReference>
<dbReference type="InterPro" id="IPR006067">
    <property type="entry name" value="NO2/SO3_Rdtase_4Fe4S_dom"/>
</dbReference>
<dbReference type="InterPro" id="IPR045169">
    <property type="entry name" value="NO2/SO3_Rdtase_4Fe4S_prot"/>
</dbReference>
<dbReference type="InterPro" id="IPR045854">
    <property type="entry name" value="NO2/SO3_Rdtase_4Fe4S_sf"/>
</dbReference>
<dbReference type="InterPro" id="IPR006066">
    <property type="entry name" value="NO2/SO3_Rdtase_FeS/sirohaem_BS"/>
</dbReference>
<dbReference type="NCBIfam" id="TIGR02041">
    <property type="entry name" value="CysI"/>
    <property type="match status" value="1"/>
</dbReference>
<dbReference type="NCBIfam" id="NF010029">
    <property type="entry name" value="PRK13504.1"/>
    <property type="match status" value="1"/>
</dbReference>
<dbReference type="PANTHER" id="PTHR11493:SF47">
    <property type="entry name" value="SULFITE REDUCTASE [NADPH] SUBUNIT BETA"/>
    <property type="match status" value="1"/>
</dbReference>
<dbReference type="PANTHER" id="PTHR11493">
    <property type="entry name" value="SULFITE REDUCTASE [NADPH] SUBUNIT BETA-RELATED"/>
    <property type="match status" value="1"/>
</dbReference>
<dbReference type="Pfam" id="PF01077">
    <property type="entry name" value="NIR_SIR"/>
    <property type="match status" value="1"/>
</dbReference>
<dbReference type="Pfam" id="PF03460">
    <property type="entry name" value="NIR_SIR_ferr"/>
    <property type="match status" value="2"/>
</dbReference>
<dbReference type="PRINTS" id="PR00397">
    <property type="entry name" value="SIROHAEM"/>
</dbReference>
<dbReference type="SUPFAM" id="SSF56014">
    <property type="entry name" value="Nitrite and sulphite reductase 4Fe-4S domain-like"/>
    <property type="match status" value="2"/>
</dbReference>
<dbReference type="SUPFAM" id="SSF55124">
    <property type="entry name" value="Nitrite/Sulfite reductase N-terminal domain-like"/>
    <property type="match status" value="2"/>
</dbReference>
<dbReference type="PROSITE" id="PS00365">
    <property type="entry name" value="NIR_SIR"/>
    <property type="match status" value="1"/>
</dbReference>
<protein>
    <recommendedName>
        <fullName evidence="1">Sulfite reductase [NADPH] hemoprotein beta-component 1</fullName>
        <shortName evidence="1">SiR-HP 1</shortName>
        <shortName evidence="1">SiRHP 1</shortName>
        <ecNumber evidence="1">1.8.1.2</ecNumber>
    </recommendedName>
</protein>
<keyword id="KW-0004">4Fe-4S</keyword>
<keyword id="KW-0028">Amino-acid biosynthesis</keyword>
<keyword id="KW-0198">Cysteine biosynthesis</keyword>
<keyword id="KW-0349">Heme</keyword>
<keyword id="KW-0408">Iron</keyword>
<keyword id="KW-0411">Iron-sulfur</keyword>
<keyword id="KW-0479">Metal-binding</keyword>
<keyword id="KW-0521">NADP</keyword>
<keyword id="KW-0560">Oxidoreductase</keyword>
<sequence>MSEKHPGPLVVEGKLTDAERMKLESNYLRGTIAEDLNDGLTGGFKGDNFLLIRFHGMYQQDDRDIRAERAAQKLEPRHAMLLRCRLPGGVITTTQWKAIDKFAADNTIYGSIRLTNRQTFQFHGILKKNVKPVHQMLHSVGLDALATANDMNRNVLCTSNPYESQLHAEAYEWAKKISEHLLPRTRAYAEIWLDQKKVATTDEEPILGQTYLPRKFKTTVVIPPQNDIDLHANDMNFVAIAENGKLVGFNLLVGGGLSIEHGNKKTYARTASEFGYLPLEHTLAVAEAVVTTQRDWGNRTDRKNAKTKYTLERVGVETFKAEVERRAGIKFEPIRPYEFTGRGDRIGWVKGIDDKWHLTLFIENGRILDYPGRPLKTGLLEIAKIHKGEFRITANQNLIVASVPEDQKARIEKLARDHGLMNAVTPQRENSMACVSFPTCPLAMAEAERFLPSFIDKVEGVMNKHGVSDEHIVTRVTGCPNGCGRAMLAEVGLVGKAPGRYNLHLGGNRSGTRIPRMYRENITESEILDSLDELVGRWAKEREAGEGFGDFTVRAGIIRPVLDPARDFWE</sequence>
<organism>
    <name type="scientific">Klebsiella pneumoniae (strain 342)</name>
    <dbReference type="NCBI Taxonomy" id="507522"/>
    <lineage>
        <taxon>Bacteria</taxon>
        <taxon>Pseudomonadati</taxon>
        <taxon>Pseudomonadota</taxon>
        <taxon>Gammaproteobacteria</taxon>
        <taxon>Enterobacterales</taxon>
        <taxon>Enterobacteriaceae</taxon>
        <taxon>Klebsiella/Raoultella group</taxon>
        <taxon>Klebsiella</taxon>
        <taxon>Klebsiella pneumoniae complex</taxon>
    </lineage>
</organism>
<proteinExistence type="inferred from homology"/>
<reference key="1">
    <citation type="journal article" date="2008" name="PLoS Genet.">
        <title>Complete genome sequence of the N2-fixing broad host range endophyte Klebsiella pneumoniae 342 and virulence predictions verified in mice.</title>
        <authorList>
            <person name="Fouts D.E."/>
            <person name="Tyler H.L."/>
            <person name="DeBoy R.T."/>
            <person name="Daugherty S."/>
            <person name="Ren Q."/>
            <person name="Badger J.H."/>
            <person name="Durkin A.S."/>
            <person name="Huot H."/>
            <person name="Shrivastava S."/>
            <person name="Kothari S."/>
            <person name="Dodson R.J."/>
            <person name="Mohamoud Y."/>
            <person name="Khouri H."/>
            <person name="Roesch L.F.W."/>
            <person name="Krogfelt K.A."/>
            <person name="Struve C."/>
            <person name="Triplett E.W."/>
            <person name="Methe B.A."/>
        </authorList>
    </citation>
    <scope>NUCLEOTIDE SEQUENCE [LARGE SCALE GENOMIC DNA]</scope>
    <source>
        <strain>342</strain>
    </source>
</reference>
<accession>B5XV25</accession>
<evidence type="ECO:0000255" key="1">
    <source>
        <dbReference type="HAMAP-Rule" id="MF_01540"/>
    </source>
</evidence>
<comment type="function">
    <text evidence="1">Component of the sulfite reductase complex that catalyzes the 6-electron reduction of sulfite to sulfide. This is one of several activities required for the biosynthesis of L-cysteine from sulfate.</text>
</comment>
<comment type="catalytic activity">
    <reaction evidence="1">
        <text>hydrogen sulfide + 3 NADP(+) + 3 H2O = sulfite + 3 NADPH + 4 H(+)</text>
        <dbReference type="Rhea" id="RHEA:13801"/>
        <dbReference type="ChEBI" id="CHEBI:15377"/>
        <dbReference type="ChEBI" id="CHEBI:15378"/>
        <dbReference type="ChEBI" id="CHEBI:17359"/>
        <dbReference type="ChEBI" id="CHEBI:29919"/>
        <dbReference type="ChEBI" id="CHEBI:57783"/>
        <dbReference type="ChEBI" id="CHEBI:58349"/>
        <dbReference type="EC" id="1.8.1.2"/>
    </reaction>
</comment>
<comment type="cofactor">
    <cofactor evidence="1">
        <name>siroheme</name>
        <dbReference type="ChEBI" id="CHEBI:60052"/>
    </cofactor>
    <text evidence="1">Binds 1 siroheme per subunit.</text>
</comment>
<comment type="cofactor">
    <cofactor evidence="1">
        <name>[4Fe-4S] cluster</name>
        <dbReference type="ChEBI" id="CHEBI:49883"/>
    </cofactor>
    <text evidence="1">Binds 1 [4Fe-4S] cluster per subunit.</text>
</comment>
<comment type="pathway">
    <text evidence="1">Sulfur metabolism; hydrogen sulfide biosynthesis; hydrogen sulfide from sulfite (NADPH route): step 1/1.</text>
</comment>
<comment type="subunit">
    <text evidence="1">Alpha(8)-beta(8). The alpha component is a flavoprotein, the beta component is a hemoprotein.</text>
</comment>
<comment type="similarity">
    <text evidence="1">Belongs to the nitrite and sulfite reductase 4Fe-4S domain family.</text>
</comment>
<name>CYSI1_KLEP3</name>
<gene>
    <name evidence="1" type="primary">cysI1</name>
    <name type="ordered locus">KPK_1005</name>
</gene>